<keyword id="KW-0333">Golgi apparatus</keyword>
<keyword id="KW-0418">Kinase</keyword>
<keyword id="KW-0539">Nucleus</keyword>
<keyword id="KW-0597">Phosphoprotein</keyword>
<keyword id="KW-1185">Reference proteome</keyword>
<keyword id="KW-0808">Transferase</keyword>
<protein>
    <recommendedName>
        <fullName>Phosphatidylinositol 4-kinase pik1</fullName>
        <shortName>PI4-kinase</shortName>
        <shortName>PtdIns-4-kinase</shortName>
        <ecNumber>2.7.1.67</ecNumber>
    </recommendedName>
</protein>
<evidence type="ECO:0000250" key="1"/>
<evidence type="ECO:0000255" key="2">
    <source>
        <dbReference type="PROSITE-ProRule" id="PRU00269"/>
    </source>
</evidence>
<evidence type="ECO:0000255" key="3">
    <source>
        <dbReference type="PROSITE-ProRule" id="PRU00878"/>
    </source>
</evidence>
<evidence type="ECO:0000256" key="4">
    <source>
        <dbReference type="SAM" id="MobiDB-lite"/>
    </source>
</evidence>
<evidence type="ECO:0000269" key="5">
    <source>
    </source>
</evidence>
<evidence type="ECO:0000269" key="6">
    <source>
    </source>
</evidence>
<evidence type="ECO:0000269" key="7">
    <source>
    </source>
</evidence>
<evidence type="ECO:0000269" key="8">
    <source>
    </source>
</evidence>
<evidence type="ECO:0000305" key="9"/>
<sequence length="851" mass="96658">MPSSNSGNELLLRFFESAHFTSQLCVAYLSRYPNNIGIHHFLCEKLATFPYEEIEFFIPQLIHLVLNKDSESVALEEFIISQCEQNTQCALITFWYLQAHMVDLGLQPHSSCFKICKRLYNRIQILVFMSSSSLIQSQQKISENVTPALILSGIMLGGVCVPELLKKAGPIAIAQGRKAPRQDPDESDVDVLRRLSTEPRYSLDVLRSSLNNSIVEQHSEVSLRLKAPELTRTHSYQSSATLSIDEQRRVLRSNYFQQEIQFLFALQDISIRLIIVPRQARLSSLRAELALLNNNLPADVNIPLLRSYHKEVSHKIVRIDPKEATILNSAERVPYLIMVEVLSGELSFEPQSKKNKAKVQKIVSHKNQRKRWFDLTDVDPYTNLQDSTDNDISESESEGGDLSMSPLIKGLVPDTLSLSKSFSSFGNVSLQVPSSHRDTDVVLLSGRHSDSDGNGALKRSKIYASEITARMRAAATMLSQLDAEGSRRPKAETERIKNSIILDMQRLEEERLNEPSIYPVSVDISCAEDLRFGKETQKAERKGDRDDPSAATFQEDWYAKKERIRKSSPYGHYPNWDLVSVIVKTGADLRQETFACQLIYAFQRVWLECKEKVWVRRMKILVTGDNSGLIETITNAISVHSIKKNLTKQLREAELAQGKIAGKNVVTLKDYFIKQFGDPNSSRYRQAQTNFLQSLVAYSIISYLLQLKDRHNGNVLIDSEGHIIHIDFGFLLTNTPGNVGFESAPFKLTADYLEILDDRFDEYRSLMKAAFKSVRKNADQIILLVEVMQNNSTMPCFRAGENTSAQLLQRFQLQLGDKECDDFVDLLIQKANCSVWTRLYDLFQNITNGIY</sequence>
<comment type="function">
    <text evidence="1">Acts on phosphatidylinositol (PI) in the first committed step in the production of the second messenger inositol 1,4,5,-trisphosphate. PIK1 is part of a nuclear phosphoinositide cycle and could control cytokinesis through the actin cytoskeleton (By similarity).</text>
</comment>
<comment type="catalytic activity">
    <reaction>
        <text>a 1,2-diacyl-sn-glycero-3-phospho-(1D-myo-inositol) + ATP = a 1,2-diacyl-sn-glycero-3-phospho-(1D-myo-inositol 4-phosphate) + ADP + H(+)</text>
        <dbReference type="Rhea" id="RHEA:19877"/>
        <dbReference type="ChEBI" id="CHEBI:15378"/>
        <dbReference type="ChEBI" id="CHEBI:30616"/>
        <dbReference type="ChEBI" id="CHEBI:57880"/>
        <dbReference type="ChEBI" id="CHEBI:58178"/>
        <dbReference type="ChEBI" id="CHEBI:456216"/>
        <dbReference type="EC" id="2.7.1.67"/>
    </reaction>
</comment>
<comment type="subunit">
    <text evidence="5 8">Interacts with cdc4 and cam2.</text>
</comment>
<comment type="subcellular location">
    <subcellularLocation>
        <location evidence="6">Golgi apparatus</location>
    </subcellularLocation>
    <subcellularLocation>
        <location evidence="1">Nucleus</location>
    </subcellularLocation>
</comment>
<comment type="similarity">
    <text evidence="9">Belongs to the PI3/PI4-kinase family.</text>
</comment>
<dbReference type="EC" id="2.7.1.67"/>
<dbReference type="EMBL" id="CU329670">
    <property type="protein sequence ID" value="CAA93903.1"/>
    <property type="molecule type" value="Genomic_DNA"/>
</dbReference>
<dbReference type="PIR" id="T38173">
    <property type="entry name" value="T38173"/>
</dbReference>
<dbReference type="RefSeq" id="NP_594842.1">
    <property type="nucleotide sequence ID" value="NM_001020271.2"/>
</dbReference>
<dbReference type="SMR" id="Q10366"/>
<dbReference type="BioGRID" id="278377">
    <property type="interactions" value="3"/>
</dbReference>
<dbReference type="FunCoup" id="Q10366">
    <property type="interactions" value="739"/>
</dbReference>
<dbReference type="STRING" id="284812.Q10366"/>
<dbReference type="iPTMnet" id="Q10366"/>
<dbReference type="PaxDb" id="4896-SPAC22E12.16c.1"/>
<dbReference type="EnsemblFungi" id="SPAC22E12.16c.1">
    <property type="protein sequence ID" value="SPAC22E12.16c.1:pep"/>
    <property type="gene ID" value="SPAC22E12.16c"/>
</dbReference>
<dbReference type="GeneID" id="2541887"/>
<dbReference type="KEGG" id="spo:2541887"/>
<dbReference type="PomBase" id="SPAC22E12.16c">
    <property type="gene designation" value="pik1"/>
</dbReference>
<dbReference type="VEuPathDB" id="FungiDB:SPAC22E12.16c"/>
<dbReference type="eggNOG" id="KOG0903">
    <property type="taxonomic scope" value="Eukaryota"/>
</dbReference>
<dbReference type="HOGENOM" id="CLU_002446_2_0_1"/>
<dbReference type="InParanoid" id="Q10366"/>
<dbReference type="OMA" id="TQDYVDV"/>
<dbReference type="PhylomeDB" id="Q10366"/>
<dbReference type="Reactome" id="R-SPO-1660514">
    <property type="pathway name" value="Synthesis of PIPs at the Golgi membrane"/>
</dbReference>
<dbReference type="PRO" id="PR:Q10366"/>
<dbReference type="Proteomes" id="UP000002485">
    <property type="component" value="Chromosome I"/>
</dbReference>
<dbReference type="GO" id="GO:0005737">
    <property type="term" value="C:cytoplasm"/>
    <property type="evidence" value="ECO:0000318"/>
    <property type="project" value="GO_Central"/>
</dbReference>
<dbReference type="GO" id="GO:0005794">
    <property type="term" value="C:Golgi apparatus"/>
    <property type="evidence" value="ECO:0007005"/>
    <property type="project" value="PomBase"/>
</dbReference>
<dbReference type="GO" id="GO:0016020">
    <property type="term" value="C:membrane"/>
    <property type="evidence" value="ECO:0000318"/>
    <property type="project" value="GO_Central"/>
</dbReference>
<dbReference type="GO" id="GO:0005634">
    <property type="term" value="C:nucleus"/>
    <property type="evidence" value="ECO:0000266"/>
    <property type="project" value="PomBase"/>
</dbReference>
<dbReference type="GO" id="GO:0032588">
    <property type="term" value="C:trans-Golgi network membrane"/>
    <property type="evidence" value="ECO:0000269"/>
    <property type="project" value="PomBase"/>
</dbReference>
<dbReference type="GO" id="GO:0004430">
    <property type="term" value="F:1-phosphatidylinositol 4-kinase activity"/>
    <property type="evidence" value="ECO:0000269"/>
    <property type="project" value="PomBase"/>
</dbReference>
<dbReference type="GO" id="GO:0046854">
    <property type="term" value="P:phosphatidylinositol phosphate biosynthetic process"/>
    <property type="evidence" value="ECO:0000269"/>
    <property type="project" value="PomBase"/>
</dbReference>
<dbReference type="GO" id="GO:0048015">
    <property type="term" value="P:phosphatidylinositol-mediated signaling"/>
    <property type="evidence" value="ECO:0000318"/>
    <property type="project" value="GO_Central"/>
</dbReference>
<dbReference type="CDD" id="cd05168">
    <property type="entry name" value="PI4Kc_III_beta"/>
    <property type="match status" value="1"/>
</dbReference>
<dbReference type="FunFam" id="3.30.1010.10:FF:000021">
    <property type="entry name" value="Phosphatidylinositol 4-kinase"/>
    <property type="match status" value="1"/>
</dbReference>
<dbReference type="FunFam" id="1.10.1070.11:FF:000016">
    <property type="entry name" value="PIK1p Phosphatidylinositol 4-kinase"/>
    <property type="match status" value="1"/>
</dbReference>
<dbReference type="Gene3D" id="6.10.140.1260">
    <property type="match status" value="1"/>
</dbReference>
<dbReference type="Gene3D" id="1.10.1070.11">
    <property type="entry name" value="Phosphatidylinositol 3-/4-kinase, catalytic domain"/>
    <property type="match status" value="1"/>
</dbReference>
<dbReference type="Gene3D" id="3.30.1010.10">
    <property type="entry name" value="Phosphatidylinositol 3-kinase Catalytic Subunit, Chain A, domain 4"/>
    <property type="match status" value="1"/>
</dbReference>
<dbReference type="InterPro" id="IPR016024">
    <property type="entry name" value="ARM-type_fold"/>
</dbReference>
<dbReference type="InterPro" id="IPR011009">
    <property type="entry name" value="Kinase-like_dom_sf"/>
</dbReference>
<dbReference type="InterPro" id="IPR021601">
    <property type="entry name" value="Phosphatidylino_kinase_fungi"/>
</dbReference>
<dbReference type="InterPro" id="IPR000403">
    <property type="entry name" value="PI3/4_kinase_cat_dom"/>
</dbReference>
<dbReference type="InterPro" id="IPR036940">
    <property type="entry name" value="PI3/4_kinase_cat_sf"/>
</dbReference>
<dbReference type="InterPro" id="IPR018936">
    <property type="entry name" value="PI3/4_kinase_CS"/>
</dbReference>
<dbReference type="InterPro" id="IPR001263">
    <property type="entry name" value="PI3K_accessory_dom"/>
</dbReference>
<dbReference type="InterPro" id="IPR049160">
    <property type="entry name" value="PI4KB-PIK1_PIK"/>
</dbReference>
<dbReference type="InterPro" id="IPR015433">
    <property type="entry name" value="PI_Kinase"/>
</dbReference>
<dbReference type="PANTHER" id="PTHR10048:SF22">
    <property type="entry name" value="PHOSPHATIDYLINOSITOL 4-KINASE BETA"/>
    <property type="match status" value="1"/>
</dbReference>
<dbReference type="PANTHER" id="PTHR10048">
    <property type="entry name" value="PHOSPHATIDYLINOSITOL KINASE"/>
    <property type="match status" value="1"/>
</dbReference>
<dbReference type="Pfam" id="PF00454">
    <property type="entry name" value="PI3_PI4_kinase"/>
    <property type="match status" value="1"/>
</dbReference>
<dbReference type="Pfam" id="PF21245">
    <property type="entry name" value="PI4KB-PIK1_PIK"/>
    <property type="match status" value="1"/>
</dbReference>
<dbReference type="Pfam" id="PF11522">
    <property type="entry name" value="Pik1"/>
    <property type="match status" value="1"/>
</dbReference>
<dbReference type="SMART" id="SM00146">
    <property type="entry name" value="PI3Kc"/>
    <property type="match status" value="1"/>
</dbReference>
<dbReference type="SUPFAM" id="SSF48371">
    <property type="entry name" value="ARM repeat"/>
    <property type="match status" value="1"/>
</dbReference>
<dbReference type="SUPFAM" id="SSF56112">
    <property type="entry name" value="Protein kinase-like (PK-like)"/>
    <property type="match status" value="1"/>
</dbReference>
<dbReference type="PROSITE" id="PS00915">
    <property type="entry name" value="PI3_4_KINASE_1"/>
    <property type="match status" value="1"/>
</dbReference>
<dbReference type="PROSITE" id="PS00916">
    <property type="entry name" value="PI3_4_KINASE_2"/>
    <property type="match status" value="1"/>
</dbReference>
<dbReference type="PROSITE" id="PS50290">
    <property type="entry name" value="PI3_4_KINASE_3"/>
    <property type="match status" value="1"/>
</dbReference>
<dbReference type="PROSITE" id="PS51545">
    <property type="entry name" value="PIK_HELICAL"/>
    <property type="match status" value="1"/>
</dbReference>
<feature type="chain" id="PRO_0000088848" description="Phosphatidylinositol 4-kinase pik1">
    <location>
        <begin position="1"/>
        <end position="851"/>
    </location>
</feature>
<feature type="domain" description="PIK helical" evidence="3">
    <location>
        <begin position="1"/>
        <end position="123"/>
    </location>
</feature>
<feature type="domain" description="PI3K/PI4K catalytic" evidence="2">
    <location>
        <begin position="558"/>
        <end position="836"/>
    </location>
</feature>
<feature type="region of interest" description="Disordered" evidence="4">
    <location>
        <begin position="384"/>
        <end position="404"/>
    </location>
</feature>
<feature type="region of interest" description="G-loop" evidence="2">
    <location>
        <begin position="564"/>
        <end position="570"/>
    </location>
</feature>
<feature type="region of interest" description="Catalytic loop" evidence="2">
    <location>
        <begin position="706"/>
        <end position="714"/>
    </location>
</feature>
<feature type="region of interest" description="Activation loop" evidence="2">
    <location>
        <begin position="725"/>
        <end position="749"/>
    </location>
</feature>
<feature type="compositionally biased region" description="Acidic residues" evidence="4">
    <location>
        <begin position="388"/>
        <end position="399"/>
    </location>
</feature>
<feature type="modified residue" description="Phosphoserine" evidence="7">
    <location>
        <position position="202"/>
    </location>
</feature>
<feature type="modified residue" description="Phosphoserine" evidence="7">
    <location>
        <position position="219"/>
    </location>
</feature>
<feature type="modified residue" description="Phosphoserine" evidence="7">
    <location>
        <position position="222"/>
    </location>
</feature>
<feature type="modified residue" description="Phosphoserine" evidence="7">
    <location>
        <position position="235"/>
    </location>
</feature>
<feature type="modified residue" description="Phosphotyrosine" evidence="7">
    <location>
        <position position="236"/>
    </location>
</feature>
<name>PIK1_SCHPO</name>
<proteinExistence type="evidence at protein level"/>
<accession>Q10366</accession>
<gene>
    <name type="primary">pik1</name>
    <name type="ORF">SPAC22E12.16c</name>
</gene>
<reference key="1">
    <citation type="journal article" date="2002" name="Nature">
        <title>The genome sequence of Schizosaccharomyces pombe.</title>
        <authorList>
            <person name="Wood V."/>
            <person name="Gwilliam R."/>
            <person name="Rajandream M.A."/>
            <person name="Lyne M.H."/>
            <person name="Lyne R."/>
            <person name="Stewart A."/>
            <person name="Sgouros J.G."/>
            <person name="Peat N."/>
            <person name="Hayles J."/>
            <person name="Baker S.G."/>
            <person name="Basham D."/>
            <person name="Bowman S."/>
            <person name="Brooks K."/>
            <person name="Brown D."/>
            <person name="Brown S."/>
            <person name="Chillingworth T."/>
            <person name="Churcher C.M."/>
            <person name="Collins M."/>
            <person name="Connor R."/>
            <person name="Cronin A."/>
            <person name="Davis P."/>
            <person name="Feltwell T."/>
            <person name="Fraser A."/>
            <person name="Gentles S."/>
            <person name="Goble A."/>
            <person name="Hamlin N."/>
            <person name="Harris D.E."/>
            <person name="Hidalgo J."/>
            <person name="Hodgson G."/>
            <person name="Holroyd S."/>
            <person name="Hornsby T."/>
            <person name="Howarth S."/>
            <person name="Huckle E.J."/>
            <person name="Hunt S."/>
            <person name="Jagels K."/>
            <person name="James K.D."/>
            <person name="Jones L."/>
            <person name="Jones M."/>
            <person name="Leather S."/>
            <person name="McDonald S."/>
            <person name="McLean J."/>
            <person name="Mooney P."/>
            <person name="Moule S."/>
            <person name="Mungall K.L."/>
            <person name="Murphy L.D."/>
            <person name="Niblett D."/>
            <person name="Odell C."/>
            <person name="Oliver K."/>
            <person name="O'Neil S."/>
            <person name="Pearson D."/>
            <person name="Quail M.A."/>
            <person name="Rabbinowitsch E."/>
            <person name="Rutherford K.M."/>
            <person name="Rutter S."/>
            <person name="Saunders D."/>
            <person name="Seeger K."/>
            <person name="Sharp S."/>
            <person name="Skelton J."/>
            <person name="Simmonds M.N."/>
            <person name="Squares R."/>
            <person name="Squares S."/>
            <person name="Stevens K."/>
            <person name="Taylor K."/>
            <person name="Taylor R.G."/>
            <person name="Tivey A."/>
            <person name="Walsh S.V."/>
            <person name="Warren T."/>
            <person name="Whitehead S."/>
            <person name="Woodward J.R."/>
            <person name="Volckaert G."/>
            <person name="Aert R."/>
            <person name="Robben J."/>
            <person name="Grymonprez B."/>
            <person name="Weltjens I."/>
            <person name="Vanstreels E."/>
            <person name="Rieger M."/>
            <person name="Schaefer M."/>
            <person name="Mueller-Auer S."/>
            <person name="Gabel C."/>
            <person name="Fuchs M."/>
            <person name="Duesterhoeft A."/>
            <person name="Fritzc C."/>
            <person name="Holzer E."/>
            <person name="Moestl D."/>
            <person name="Hilbert H."/>
            <person name="Borzym K."/>
            <person name="Langer I."/>
            <person name="Beck A."/>
            <person name="Lehrach H."/>
            <person name="Reinhardt R."/>
            <person name="Pohl T.M."/>
            <person name="Eger P."/>
            <person name="Zimmermann W."/>
            <person name="Wedler H."/>
            <person name="Wambutt R."/>
            <person name="Purnelle B."/>
            <person name="Goffeau A."/>
            <person name="Cadieu E."/>
            <person name="Dreano S."/>
            <person name="Gloux S."/>
            <person name="Lelaure V."/>
            <person name="Mottier S."/>
            <person name="Galibert F."/>
            <person name="Aves S.J."/>
            <person name="Xiang Z."/>
            <person name="Hunt C."/>
            <person name="Moore K."/>
            <person name="Hurst S.M."/>
            <person name="Lucas M."/>
            <person name="Rochet M."/>
            <person name="Gaillardin C."/>
            <person name="Tallada V.A."/>
            <person name="Garzon A."/>
            <person name="Thode G."/>
            <person name="Daga R.R."/>
            <person name="Cruzado L."/>
            <person name="Jimenez J."/>
            <person name="Sanchez M."/>
            <person name="del Rey F."/>
            <person name="Benito J."/>
            <person name="Dominguez A."/>
            <person name="Revuelta J.L."/>
            <person name="Moreno S."/>
            <person name="Armstrong J."/>
            <person name="Forsburg S.L."/>
            <person name="Cerutti L."/>
            <person name="Lowe T."/>
            <person name="McCombie W.R."/>
            <person name="Paulsen I."/>
            <person name="Potashkin J."/>
            <person name="Shpakovski G.V."/>
            <person name="Ussery D."/>
            <person name="Barrell B.G."/>
            <person name="Nurse P."/>
        </authorList>
    </citation>
    <scope>NUCLEOTIDE SEQUENCE [LARGE SCALE GENOMIC DNA]</scope>
    <source>
        <strain>972 / ATCC 24843</strain>
    </source>
</reference>
<reference key="2">
    <citation type="journal article" date="2001" name="J. Biol. Chem.">
        <title>Cdc4p, a contractile ring protein essential for cytokinesis in Schizosaccharomyces pombe, interacts with a phosphatidylinositol 4-kinase.</title>
        <authorList>
            <person name="Desautels M."/>
            <person name="Den Haese J.P."/>
            <person name="Slupsky C.M."/>
            <person name="McIntosh L.P."/>
            <person name="Hemmingsen S.M."/>
        </authorList>
    </citation>
    <scope>INTERACTION WITH CDC4</scope>
</reference>
<reference key="3">
    <citation type="journal article" date="2006" name="Nat. Biotechnol.">
        <title>ORFeome cloning and global analysis of protein localization in the fission yeast Schizosaccharomyces pombe.</title>
        <authorList>
            <person name="Matsuyama A."/>
            <person name="Arai R."/>
            <person name="Yashiroda Y."/>
            <person name="Shirai A."/>
            <person name="Kamata A."/>
            <person name="Sekido S."/>
            <person name="Kobayashi Y."/>
            <person name="Hashimoto A."/>
            <person name="Hamamoto M."/>
            <person name="Hiraoka Y."/>
            <person name="Horinouchi S."/>
            <person name="Yoshida M."/>
        </authorList>
    </citation>
    <scope>SUBCELLULAR LOCATION [LARGE SCALE ANALYSIS]</scope>
</reference>
<reference key="4">
    <citation type="journal article" date="2008" name="J. Proteome Res.">
        <title>Phosphoproteome analysis of fission yeast.</title>
        <authorList>
            <person name="Wilson-Grady J.T."/>
            <person name="Villen J."/>
            <person name="Gygi S.P."/>
        </authorList>
    </citation>
    <scope>PHOSPHORYLATION [LARGE SCALE ANALYSIS] AT SER-202; SER-219; SER-222; SER-235 AND TYR-236</scope>
    <scope>IDENTIFICATION BY MASS SPECTROMETRY</scope>
</reference>
<reference key="5">
    <citation type="journal article" date="2011" name="J. Cell Sci.">
        <title>A calmodulin-related light chain from fission yeast that functions with myosin-I and PI 4-kinase.</title>
        <authorList>
            <person name="Sammons M.R."/>
            <person name="James M.L."/>
            <person name="Clayton J.E."/>
            <person name="Sladewski T.E."/>
            <person name="Sirotkin V."/>
            <person name="Lord M."/>
        </authorList>
    </citation>
    <scope>INTERACTION WITH CAM2</scope>
</reference>
<organism>
    <name type="scientific">Schizosaccharomyces pombe (strain 972 / ATCC 24843)</name>
    <name type="common">Fission yeast</name>
    <dbReference type="NCBI Taxonomy" id="284812"/>
    <lineage>
        <taxon>Eukaryota</taxon>
        <taxon>Fungi</taxon>
        <taxon>Dikarya</taxon>
        <taxon>Ascomycota</taxon>
        <taxon>Taphrinomycotina</taxon>
        <taxon>Schizosaccharomycetes</taxon>
        <taxon>Schizosaccharomycetales</taxon>
        <taxon>Schizosaccharomycetaceae</taxon>
        <taxon>Schizosaccharomyces</taxon>
    </lineage>
</organism>